<reference key="1">
    <citation type="journal article" date="2004" name="Kidney Int.">
        <title>Gene expression variance based on random sequencing in rat remnant kidney.</title>
        <authorList>
            <person name="Horiba N."/>
            <person name="Masuda S."/>
            <person name="Takeuchi A."/>
            <person name="Saito H."/>
            <person name="Okuda M."/>
            <person name="Inui K."/>
        </authorList>
    </citation>
    <scope>NUCLEOTIDE SEQUENCE [MRNA]</scope>
    <scope>TISSUE SPECIFICITY</scope>
    <source>
        <strain>Wistar</strain>
        <tissue>Kidney</tissue>
    </source>
</reference>
<reference key="2">
    <citation type="journal article" date="2004" name="Genome Res.">
        <title>The status, quality, and expansion of the NIH full-length cDNA project: the Mammalian Gene Collection (MGC).</title>
        <authorList>
            <consortium name="The MGC Project Team"/>
        </authorList>
    </citation>
    <scope>NUCLEOTIDE SEQUENCE [LARGE SCALE MRNA]</scope>
    <source>
        <tissue>Kidney</tissue>
    </source>
</reference>
<name>TCAL8_RAT</name>
<dbReference type="EMBL" id="AB108667">
    <property type="protein sequence ID" value="BAD23892.1"/>
    <property type="molecule type" value="mRNA"/>
</dbReference>
<dbReference type="EMBL" id="BC086418">
    <property type="protein sequence ID" value="AAH86418.1"/>
    <property type="molecule type" value="mRNA"/>
</dbReference>
<dbReference type="RefSeq" id="NP_001014297.1">
    <property type="nucleotide sequence ID" value="NM_001014275.1"/>
</dbReference>
<dbReference type="SMR" id="Q6I7R5"/>
<dbReference type="FunCoup" id="Q6I7R5">
    <property type="interactions" value="299"/>
</dbReference>
<dbReference type="STRING" id="10116.ENSRNOP00000053943"/>
<dbReference type="PhosphoSitePlus" id="Q6I7R5"/>
<dbReference type="PaxDb" id="10116-ENSRNOP00000053943"/>
<dbReference type="Ensembl" id="ENSRNOT00000017138.7">
    <property type="protein sequence ID" value="ENSRNOP00000053943.2"/>
    <property type="gene ID" value="ENSRNOG00000028585.6"/>
</dbReference>
<dbReference type="Ensembl" id="ENSRNOT00000097834.1">
    <property type="protein sequence ID" value="ENSRNOP00000080501.1"/>
    <property type="gene ID" value="ENSRNOG00000028585.6"/>
</dbReference>
<dbReference type="Ensembl" id="ENSRNOT00000102117.1">
    <property type="protein sequence ID" value="ENSRNOP00000096711.1"/>
    <property type="gene ID" value="ENSRNOG00000028585.6"/>
</dbReference>
<dbReference type="Ensembl" id="ENSRNOT00000118719.1">
    <property type="protein sequence ID" value="ENSRNOP00000086262.1"/>
    <property type="gene ID" value="ENSRNOG00000028585.6"/>
</dbReference>
<dbReference type="GeneID" id="367909"/>
<dbReference type="KEGG" id="rno:367909"/>
<dbReference type="UCSC" id="RGD:1359631">
    <property type="organism name" value="rat"/>
</dbReference>
<dbReference type="AGR" id="RGD:1359631"/>
<dbReference type="CTD" id="90843"/>
<dbReference type="RGD" id="1359631">
    <property type="gene designation" value="Tceal8"/>
</dbReference>
<dbReference type="eggNOG" id="ENOG502R12B">
    <property type="taxonomic scope" value="Eukaryota"/>
</dbReference>
<dbReference type="GeneTree" id="ENSGT00950000183164"/>
<dbReference type="HOGENOM" id="CLU_181913_0_0_1"/>
<dbReference type="InParanoid" id="Q6I7R5"/>
<dbReference type="OMA" id="QTSCEEN"/>
<dbReference type="OrthoDB" id="9825341at2759"/>
<dbReference type="PhylomeDB" id="Q6I7R5"/>
<dbReference type="PRO" id="PR:Q6I7R5"/>
<dbReference type="Proteomes" id="UP000002494">
    <property type="component" value="Chromosome X"/>
</dbReference>
<dbReference type="Bgee" id="ENSRNOG00000028585">
    <property type="expression patterns" value="Expressed in ovary and 20 other cell types or tissues"/>
</dbReference>
<dbReference type="GO" id="GO:0005634">
    <property type="term" value="C:nucleus"/>
    <property type="evidence" value="ECO:0007669"/>
    <property type="project" value="UniProtKB-SubCell"/>
</dbReference>
<dbReference type="InterPro" id="IPR021156">
    <property type="entry name" value="TF_A-like/BEX"/>
</dbReference>
<dbReference type="Pfam" id="PF04538">
    <property type="entry name" value="BEX"/>
    <property type="match status" value="1"/>
</dbReference>
<sequence length="117" mass="13447">MQKSCDENEGTPQNTPKADEGHPSEDPPQQAGENLQASGENVREETDGSLRGEPAEPSPEPKEDTPARHLNPEEVIRGVDELERLREEIRRVRNKFVLMHWKQRHSRSRPYPVCFRP</sequence>
<feature type="chain" id="PRO_0000239218" description="Transcription elongation factor A protein-like 8">
    <location>
        <begin position="1"/>
        <end position="117"/>
    </location>
</feature>
<feature type="region of interest" description="Disordered" evidence="2">
    <location>
        <begin position="1"/>
        <end position="81"/>
    </location>
</feature>
<feature type="coiled-coil region" evidence="1">
    <location>
        <begin position="73"/>
        <end position="100"/>
    </location>
</feature>
<feature type="compositionally biased region" description="Basic and acidic residues" evidence="2">
    <location>
        <begin position="41"/>
        <end position="81"/>
    </location>
</feature>
<protein>
    <recommendedName>
        <fullName>Transcription elongation factor A protein-like 8</fullName>
        <shortName>TCEA-like protein 8</shortName>
    </recommendedName>
    <alternativeName>
        <fullName>Transcription elongation factor S-II protein-like 8</fullName>
    </alternativeName>
    <alternativeName>
        <fullName>Up-regulated in nephrectomized rat kidney #1</fullName>
    </alternativeName>
</protein>
<accession>Q6I7R5</accession>
<organism>
    <name type="scientific">Rattus norvegicus</name>
    <name type="common">Rat</name>
    <dbReference type="NCBI Taxonomy" id="10116"/>
    <lineage>
        <taxon>Eukaryota</taxon>
        <taxon>Metazoa</taxon>
        <taxon>Chordata</taxon>
        <taxon>Craniata</taxon>
        <taxon>Vertebrata</taxon>
        <taxon>Euteleostomi</taxon>
        <taxon>Mammalia</taxon>
        <taxon>Eutheria</taxon>
        <taxon>Euarchontoglires</taxon>
        <taxon>Glires</taxon>
        <taxon>Rodentia</taxon>
        <taxon>Myomorpha</taxon>
        <taxon>Muroidea</taxon>
        <taxon>Muridae</taxon>
        <taxon>Murinae</taxon>
        <taxon>Rattus</taxon>
    </lineage>
</organism>
<gene>
    <name type="primary">Tceal8</name>
    <name type="ORF">UR-NR#1</name>
</gene>
<proteinExistence type="evidence at transcript level"/>
<evidence type="ECO:0000255" key="1"/>
<evidence type="ECO:0000256" key="2">
    <source>
        <dbReference type="SAM" id="MobiDB-lite"/>
    </source>
</evidence>
<evidence type="ECO:0000269" key="3">
    <source>
    </source>
</evidence>
<evidence type="ECO:0000305" key="4"/>
<keyword id="KW-0175">Coiled coil</keyword>
<keyword id="KW-0539">Nucleus</keyword>
<keyword id="KW-1185">Reference proteome</keyword>
<keyword id="KW-0804">Transcription</keyword>
<keyword id="KW-0805">Transcription regulation</keyword>
<comment type="function">
    <text>May be involved in transcriptional regulation.</text>
</comment>
<comment type="subcellular location">
    <subcellularLocation>
        <location evidence="4">Nucleus</location>
    </subcellularLocation>
</comment>
<comment type="tissue specificity">
    <text evidence="3">Highly expressed in kidney. Moderately expressed in heart and lung. Low expression in brain and liver. Expression is up-regulated in nephrectomized kidney.</text>
</comment>
<comment type="similarity">
    <text evidence="4">Belongs to the TFS-II family. TFA subfamily.</text>
</comment>